<proteinExistence type="inferred from homology"/>
<organism>
    <name type="scientific">Frankia casuarinae (strain DSM 45818 / CECT 9043 / HFP020203 / CcI3)</name>
    <dbReference type="NCBI Taxonomy" id="106370"/>
    <lineage>
        <taxon>Bacteria</taxon>
        <taxon>Bacillati</taxon>
        <taxon>Actinomycetota</taxon>
        <taxon>Actinomycetes</taxon>
        <taxon>Frankiales</taxon>
        <taxon>Frankiaceae</taxon>
        <taxon>Frankia</taxon>
    </lineage>
</organism>
<comment type="function">
    <text evidence="1">This protein is one of the early assembly proteins of the 50S ribosomal subunit, although it is not seen to bind rRNA by itself. It is important during the early stages of 50S assembly.</text>
</comment>
<comment type="subunit">
    <text evidence="1">Part of the 50S ribosomal subunit.</text>
</comment>
<comment type="similarity">
    <text evidence="1">Belongs to the universal ribosomal protein uL13 family.</text>
</comment>
<dbReference type="EMBL" id="CP000249">
    <property type="protein sequence ID" value="ABD09998.1"/>
    <property type="molecule type" value="Genomic_DNA"/>
</dbReference>
<dbReference type="RefSeq" id="WP_011435067.1">
    <property type="nucleotide sequence ID" value="NZ_JENI01000019.1"/>
</dbReference>
<dbReference type="SMR" id="Q2JFE4"/>
<dbReference type="STRING" id="106370.Francci3_0614"/>
<dbReference type="KEGG" id="fra:Francci3_0614"/>
<dbReference type="eggNOG" id="COG0102">
    <property type="taxonomic scope" value="Bacteria"/>
</dbReference>
<dbReference type="HOGENOM" id="CLU_082184_2_2_11"/>
<dbReference type="OrthoDB" id="9801330at2"/>
<dbReference type="PhylomeDB" id="Q2JFE4"/>
<dbReference type="Proteomes" id="UP000001937">
    <property type="component" value="Chromosome"/>
</dbReference>
<dbReference type="GO" id="GO:0022625">
    <property type="term" value="C:cytosolic large ribosomal subunit"/>
    <property type="evidence" value="ECO:0007669"/>
    <property type="project" value="TreeGrafter"/>
</dbReference>
<dbReference type="GO" id="GO:0003729">
    <property type="term" value="F:mRNA binding"/>
    <property type="evidence" value="ECO:0007669"/>
    <property type="project" value="TreeGrafter"/>
</dbReference>
<dbReference type="GO" id="GO:0003735">
    <property type="term" value="F:structural constituent of ribosome"/>
    <property type="evidence" value="ECO:0007669"/>
    <property type="project" value="InterPro"/>
</dbReference>
<dbReference type="GO" id="GO:0017148">
    <property type="term" value="P:negative regulation of translation"/>
    <property type="evidence" value="ECO:0007669"/>
    <property type="project" value="TreeGrafter"/>
</dbReference>
<dbReference type="GO" id="GO:0006412">
    <property type="term" value="P:translation"/>
    <property type="evidence" value="ECO:0007669"/>
    <property type="project" value="UniProtKB-UniRule"/>
</dbReference>
<dbReference type="CDD" id="cd00392">
    <property type="entry name" value="Ribosomal_L13"/>
    <property type="match status" value="1"/>
</dbReference>
<dbReference type="FunFam" id="3.90.1180.10:FF:000001">
    <property type="entry name" value="50S ribosomal protein L13"/>
    <property type="match status" value="1"/>
</dbReference>
<dbReference type="Gene3D" id="3.90.1180.10">
    <property type="entry name" value="Ribosomal protein L13"/>
    <property type="match status" value="1"/>
</dbReference>
<dbReference type="HAMAP" id="MF_01366">
    <property type="entry name" value="Ribosomal_uL13"/>
    <property type="match status" value="1"/>
</dbReference>
<dbReference type="InterPro" id="IPR005822">
    <property type="entry name" value="Ribosomal_uL13"/>
</dbReference>
<dbReference type="InterPro" id="IPR005823">
    <property type="entry name" value="Ribosomal_uL13_bac-type"/>
</dbReference>
<dbReference type="InterPro" id="IPR023563">
    <property type="entry name" value="Ribosomal_uL13_CS"/>
</dbReference>
<dbReference type="InterPro" id="IPR036899">
    <property type="entry name" value="Ribosomal_uL13_sf"/>
</dbReference>
<dbReference type="NCBIfam" id="TIGR01066">
    <property type="entry name" value="rplM_bact"/>
    <property type="match status" value="1"/>
</dbReference>
<dbReference type="PANTHER" id="PTHR11545:SF2">
    <property type="entry name" value="LARGE RIBOSOMAL SUBUNIT PROTEIN UL13M"/>
    <property type="match status" value="1"/>
</dbReference>
<dbReference type="PANTHER" id="PTHR11545">
    <property type="entry name" value="RIBOSOMAL PROTEIN L13"/>
    <property type="match status" value="1"/>
</dbReference>
<dbReference type="Pfam" id="PF00572">
    <property type="entry name" value="Ribosomal_L13"/>
    <property type="match status" value="1"/>
</dbReference>
<dbReference type="PIRSF" id="PIRSF002181">
    <property type="entry name" value="Ribosomal_L13"/>
    <property type="match status" value="1"/>
</dbReference>
<dbReference type="SUPFAM" id="SSF52161">
    <property type="entry name" value="Ribosomal protein L13"/>
    <property type="match status" value="1"/>
</dbReference>
<dbReference type="PROSITE" id="PS00783">
    <property type="entry name" value="RIBOSOMAL_L13"/>
    <property type="match status" value="1"/>
</dbReference>
<feature type="chain" id="PRO_0000261726" description="Large ribosomal subunit protein uL13">
    <location>
        <begin position="1"/>
        <end position="147"/>
    </location>
</feature>
<evidence type="ECO:0000255" key="1">
    <source>
        <dbReference type="HAMAP-Rule" id="MF_01366"/>
    </source>
</evidence>
<evidence type="ECO:0000305" key="2"/>
<sequence>MRTYQPKPADVQRVWHVIDATDVVLGRLATQAATLLRGKHKPYFAPHIDTGDFVVVINAGKVALSGNKREQAQYHRHSGFPGGLRSTSYGELLDTRPQIIVEKAIKGMLPKNKLGRAQGTKLKVYAGPTHPHQAQQPTPFEIIQVAQ</sequence>
<gene>
    <name evidence="1" type="primary">rplM</name>
    <name type="ordered locus">Francci3_0614</name>
</gene>
<reference key="1">
    <citation type="journal article" date="2007" name="Genome Res.">
        <title>Genome characteristics of facultatively symbiotic Frankia sp. strains reflect host range and host plant biogeography.</title>
        <authorList>
            <person name="Normand P."/>
            <person name="Lapierre P."/>
            <person name="Tisa L.S."/>
            <person name="Gogarten J.P."/>
            <person name="Alloisio N."/>
            <person name="Bagnarol E."/>
            <person name="Bassi C.A."/>
            <person name="Berry A.M."/>
            <person name="Bickhart D.M."/>
            <person name="Choisne N."/>
            <person name="Couloux A."/>
            <person name="Cournoyer B."/>
            <person name="Cruveiller S."/>
            <person name="Daubin V."/>
            <person name="Demange N."/>
            <person name="Francino M.P."/>
            <person name="Goltsman E."/>
            <person name="Huang Y."/>
            <person name="Kopp O.R."/>
            <person name="Labarre L."/>
            <person name="Lapidus A."/>
            <person name="Lavire C."/>
            <person name="Marechal J."/>
            <person name="Martinez M."/>
            <person name="Mastronunzio J.E."/>
            <person name="Mullin B.C."/>
            <person name="Niemann J."/>
            <person name="Pujic P."/>
            <person name="Rawnsley T."/>
            <person name="Rouy Z."/>
            <person name="Schenowitz C."/>
            <person name="Sellstedt A."/>
            <person name="Tavares F."/>
            <person name="Tomkins J.P."/>
            <person name="Vallenet D."/>
            <person name="Valverde C."/>
            <person name="Wall L.G."/>
            <person name="Wang Y."/>
            <person name="Medigue C."/>
            <person name="Benson D.R."/>
        </authorList>
    </citation>
    <scope>NUCLEOTIDE SEQUENCE [LARGE SCALE GENOMIC DNA]</scope>
    <source>
        <strain>DSM 45818 / CECT 9043 / HFP020203 / CcI3</strain>
    </source>
</reference>
<protein>
    <recommendedName>
        <fullName evidence="1">Large ribosomal subunit protein uL13</fullName>
    </recommendedName>
    <alternativeName>
        <fullName evidence="2">50S ribosomal protein L13</fullName>
    </alternativeName>
</protein>
<accession>Q2JFE4</accession>
<name>RL13_FRACC</name>
<keyword id="KW-1185">Reference proteome</keyword>
<keyword id="KW-0687">Ribonucleoprotein</keyword>
<keyword id="KW-0689">Ribosomal protein</keyword>